<reference key="1">
    <citation type="journal article" date="2004" name="Science">
        <title>Illuminating the evolutionary history of chlamydiae.</title>
        <authorList>
            <person name="Horn M."/>
            <person name="Collingro A."/>
            <person name="Schmitz-Esser S."/>
            <person name="Beier C.L."/>
            <person name="Purkhold U."/>
            <person name="Fartmann B."/>
            <person name="Brandt P."/>
            <person name="Nyakatura G.J."/>
            <person name="Droege M."/>
            <person name="Frishman D."/>
            <person name="Rattei T."/>
            <person name="Mewes H.-W."/>
            <person name="Wagner M."/>
        </authorList>
    </citation>
    <scope>NUCLEOTIDE SEQUENCE [LARGE SCALE GENOMIC DNA]</scope>
    <source>
        <strain>UWE25</strain>
    </source>
</reference>
<sequence>MPIENYFGKKALIIGLGVSGRAAASFLQTSGVKVLGVDRDYLQLENQPEILELKAKGLVIQADCETIDLKTFDLIVVSPGIPSNHPLIKKAHEHKKEVIGEIELGCRASCHSIIGVTGTNGKTTVTLLITHILNANGLKAKALGNVGTPLTREILTLDFQEIAVLELSSYQLDTFQQQVLDEAVVLNITPDHLERYETMENYAKSKFQIGKCLKKSGKLFVERKAAVEYQHLLNFPHSTYGYLPSCHTYTDLCSVFLEGMQQFELPLEWQGKENHDLENLLAAYAICARRGIKPQQFLQALKTFQKPSHRVEFVLEKNGIHFYDDSKGTNIDAVMRAVQSINRPVFLIAGGVDKGASYVAWLNVFKGHVKKVYAIGQAANKIQKELSLHIRVQIEANLDDAVKQAYQDAKEGDAVLLSPGCASFDMFKDYIHRGEEFKRLVKLL</sequence>
<protein>
    <recommendedName>
        <fullName evidence="1">UDP-N-acetylmuramoylalanine--D-glutamate ligase</fullName>
        <ecNumber evidence="1">6.3.2.9</ecNumber>
    </recommendedName>
    <alternativeName>
        <fullName evidence="1">D-glutamic acid-adding enzyme</fullName>
    </alternativeName>
    <alternativeName>
        <fullName evidence="1">UDP-N-acetylmuramoyl-L-alanyl-D-glutamate synthetase</fullName>
    </alternativeName>
</protein>
<organism>
    <name type="scientific">Protochlamydia amoebophila (strain UWE25)</name>
    <dbReference type="NCBI Taxonomy" id="264201"/>
    <lineage>
        <taxon>Bacteria</taxon>
        <taxon>Pseudomonadati</taxon>
        <taxon>Chlamydiota</taxon>
        <taxon>Chlamydiia</taxon>
        <taxon>Parachlamydiales</taxon>
        <taxon>Parachlamydiaceae</taxon>
        <taxon>Candidatus Protochlamydia</taxon>
    </lineage>
</organism>
<accession>Q6MBS4</accession>
<dbReference type="EC" id="6.3.2.9" evidence="1"/>
<dbReference type="EMBL" id="BX908798">
    <property type="protein sequence ID" value="CAF23975.1"/>
    <property type="molecule type" value="Genomic_DNA"/>
</dbReference>
<dbReference type="RefSeq" id="WP_011175801.1">
    <property type="nucleotide sequence ID" value="NC_005861.2"/>
</dbReference>
<dbReference type="SMR" id="Q6MBS4"/>
<dbReference type="STRING" id="264201.pc1251"/>
<dbReference type="KEGG" id="pcu:PC_RS06030"/>
<dbReference type="eggNOG" id="COG0771">
    <property type="taxonomic scope" value="Bacteria"/>
</dbReference>
<dbReference type="HOGENOM" id="CLU_032540_0_0_0"/>
<dbReference type="OrthoDB" id="9809796at2"/>
<dbReference type="UniPathway" id="UPA00219"/>
<dbReference type="Proteomes" id="UP000000529">
    <property type="component" value="Chromosome"/>
</dbReference>
<dbReference type="GO" id="GO:0005737">
    <property type="term" value="C:cytoplasm"/>
    <property type="evidence" value="ECO:0007669"/>
    <property type="project" value="UniProtKB-SubCell"/>
</dbReference>
<dbReference type="GO" id="GO:0005524">
    <property type="term" value="F:ATP binding"/>
    <property type="evidence" value="ECO:0007669"/>
    <property type="project" value="UniProtKB-UniRule"/>
</dbReference>
<dbReference type="GO" id="GO:0004326">
    <property type="term" value="F:tetrahydrofolylpolyglutamate synthase activity"/>
    <property type="evidence" value="ECO:0007669"/>
    <property type="project" value="InterPro"/>
</dbReference>
<dbReference type="GO" id="GO:0008764">
    <property type="term" value="F:UDP-N-acetylmuramoylalanine-D-glutamate ligase activity"/>
    <property type="evidence" value="ECO:0007669"/>
    <property type="project" value="UniProtKB-UniRule"/>
</dbReference>
<dbReference type="GO" id="GO:0051301">
    <property type="term" value="P:cell division"/>
    <property type="evidence" value="ECO:0007669"/>
    <property type="project" value="UniProtKB-KW"/>
</dbReference>
<dbReference type="GO" id="GO:0071555">
    <property type="term" value="P:cell wall organization"/>
    <property type="evidence" value="ECO:0007669"/>
    <property type="project" value="UniProtKB-KW"/>
</dbReference>
<dbReference type="GO" id="GO:0009252">
    <property type="term" value="P:peptidoglycan biosynthetic process"/>
    <property type="evidence" value="ECO:0007669"/>
    <property type="project" value="UniProtKB-UniRule"/>
</dbReference>
<dbReference type="GO" id="GO:0008360">
    <property type="term" value="P:regulation of cell shape"/>
    <property type="evidence" value="ECO:0007669"/>
    <property type="project" value="UniProtKB-KW"/>
</dbReference>
<dbReference type="Gene3D" id="3.90.190.20">
    <property type="entry name" value="Mur ligase, C-terminal domain"/>
    <property type="match status" value="1"/>
</dbReference>
<dbReference type="Gene3D" id="3.40.1190.10">
    <property type="entry name" value="Mur-like, catalytic domain"/>
    <property type="match status" value="1"/>
</dbReference>
<dbReference type="Gene3D" id="3.40.50.720">
    <property type="entry name" value="NAD(P)-binding Rossmann-like Domain"/>
    <property type="match status" value="1"/>
</dbReference>
<dbReference type="HAMAP" id="MF_00639">
    <property type="entry name" value="MurD"/>
    <property type="match status" value="1"/>
</dbReference>
<dbReference type="InterPro" id="IPR018109">
    <property type="entry name" value="Folylpolyglutamate_synth_CS"/>
</dbReference>
<dbReference type="InterPro" id="IPR036565">
    <property type="entry name" value="Mur-like_cat_sf"/>
</dbReference>
<dbReference type="InterPro" id="IPR004101">
    <property type="entry name" value="Mur_ligase_C"/>
</dbReference>
<dbReference type="InterPro" id="IPR036615">
    <property type="entry name" value="Mur_ligase_C_dom_sf"/>
</dbReference>
<dbReference type="InterPro" id="IPR013221">
    <property type="entry name" value="Mur_ligase_cen"/>
</dbReference>
<dbReference type="InterPro" id="IPR005762">
    <property type="entry name" value="MurD"/>
</dbReference>
<dbReference type="NCBIfam" id="TIGR01087">
    <property type="entry name" value="murD"/>
    <property type="match status" value="1"/>
</dbReference>
<dbReference type="PANTHER" id="PTHR43692">
    <property type="entry name" value="UDP-N-ACETYLMURAMOYLALANINE--D-GLUTAMATE LIGASE"/>
    <property type="match status" value="1"/>
</dbReference>
<dbReference type="PANTHER" id="PTHR43692:SF1">
    <property type="entry name" value="UDP-N-ACETYLMURAMOYLALANINE--D-GLUTAMATE LIGASE"/>
    <property type="match status" value="1"/>
</dbReference>
<dbReference type="Pfam" id="PF02875">
    <property type="entry name" value="Mur_ligase_C"/>
    <property type="match status" value="1"/>
</dbReference>
<dbReference type="Pfam" id="PF08245">
    <property type="entry name" value="Mur_ligase_M"/>
    <property type="match status" value="1"/>
</dbReference>
<dbReference type="Pfam" id="PF21799">
    <property type="entry name" value="MurD-like_N"/>
    <property type="match status" value="1"/>
</dbReference>
<dbReference type="SUPFAM" id="SSF51984">
    <property type="entry name" value="MurCD N-terminal domain"/>
    <property type="match status" value="1"/>
</dbReference>
<dbReference type="SUPFAM" id="SSF53623">
    <property type="entry name" value="MurD-like peptide ligases, catalytic domain"/>
    <property type="match status" value="1"/>
</dbReference>
<dbReference type="SUPFAM" id="SSF53244">
    <property type="entry name" value="MurD-like peptide ligases, peptide-binding domain"/>
    <property type="match status" value="1"/>
</dbReference>
<feature type="chain" id="PRO_0000109053" description="UDP-N-acetylmuramoylalanine--D-glutamate ligase">
    <location>
        <begin position="1"/>
        <end position="444"/>
    </location>
</feature>
<feature type="binding site" evidence="1">
    <location>
        <begin position="118"/>
        <end position="124"/>
    </location>
    <ligand>
        <name>ATP</name>
        <dbReference type="ChEBI" id="CHEBI:30616"/>
    </ligand>
</feature>
<proteinExistence type="inferred from homology"/>
<keyword id="KW-0067">ATP-binding</keyword>
<keyword id="KW-0131">Cell cycle</keyword>
<keyword id="KW-0132">Cell division</keyword>
<keyword id="KW-0133">Cell shape</keyword>
<keyword id="KW-0961">Cell wall biogenesis/degradation</keyword>
<keyword id="KW-0963">Cytoplasm</keyword>
<keyword id="KW-0436">Ligase</keyword>
<keyword id="KW-0547">Nucleotide-binding</keyword>
<keyword id="KW-0573">Peptidoglycan synthesis</keyword>
<keyword id="KW-1185">Reference proteome</keyword>
<name>MURD_PARUW</name>
<gene>
    <name evidence="1" type="primary">murD</name>
    <name type="ordered locus">pc1251</name>
</gene>
<evidence type="ECO:0000255" key="1">
    <source>
        <dbReference type="HAMAP-Rule" id="MF_00639"/>
    </source>
</evidence>
<comment type="function">
    <text evidence="1">Cell wall formation. Catalyzes the addition of glutamate to the nucleotide precursor UDP-N-acetylmuramoyl-L-alanine (UMA).</text>
</comment>
<comment type="catalytic activity">
    <reaction evidence="1">
        <text>UDP-N-acetyl-alpha-D-muramoyl-L-alanine + D-glutamate + ATP = UDP-N-acetyl-alpha-D-muramoyl-L-alanyl-D-glutamate + ADP + phosphate + H(+)</text>
        <dbReference type="Rhea" id="RHEA:16429"/>
        <dbReference type="ChEBI" id="CHEBI:15378"/>
        <dbReference type="ChEBI" id="CHEBI:29986"/>
        <dbReference type="ChEBI" id="CHEBI:30616"/>
        <dbReference type="ChEBI" id="CHEBI:43474"/>
        <dbReference type="ChEBI" id="CHEBI:83898"/>
        <dbReference type="ChEBI" id="CHEBI:83900"/>
        <dbReference type="ChEBI" id="CHEBI:456216"/>
        <dbReference type="EC" id="6.3.2.9"/>
    </reaction>
</comment>
<comment type="pathway">
    <text evidence="1">Cell wall biogenesis; peptidoglycan biosynthesis.</text>
</comment>
<comment type="subcellular location">
    <subcellularLocation>
        <location evidence="1">Cytoplasm</location>
    </subcellularLocation>
</comment>
<comment type="similarity">
    <text evidence="1">Belongs to the MurCDEF family.</text>
</comment>